<name>DNLJ_BORDL</name>
<reference key="1">
    <citation type="journal article" date="2008" name="PLoS Genet.">
        <title>The genome of Borrelia recurrentis, the agent of deadly louse-borne relapsing fever, is a degraded subset of tick-borne Borrelia duttonii.</title>
        <authorList>
            <person name="Lescot M."/>
            <person name="Audic S."/>
            <person name="Robert C."/>
            <person name="Nguyen T.T."/>
            <person name="Blanc G."/>
            <person name="Cutler S.J."/>
            <person name="Wincker P."/>
            <person name="Couloux A."/>
            <person name="Claverie J.-M."/>
            <person name="Raoult D."/>
            <person name="Drancourt M."/>
        </authorList>
    </citation>
    <scope>NUCLEOTIDE SEQUENCE [LARGE SCALE GENOMIC DNA]</scope>
    <source>
        <strain>Ly</strain>
    </source>
</reference>
<proteinExistence type="inferred from homology"/>
<gene>
    <name evidence="1" type="primary">ligA</name>
    <name type="ordered locus">BDU_554</name>
</gene>
<comment type="function">
    <text evidence="1">DNA ligase that catalyzes the formation of phosphodiester linkages between 5'-phosphoryl and 3'-hydroxyl groups in double-stranded DNA using NAD as a coenzyme and as the energy source for the reaction. It is essential for DNA replication and repair of damaged DNA.</text>
</comment>
<comment type="catalytic activity">
    <reaction evidence="1">
        <text>NAD(+) + (deoxyribonucleotide)n-3'-hydroxyl + 5'-phospho-(deoxyribonucleotide)m = (deoxyribonucleotide)n+m + AMP + beta-nicotinamide D-nucleotide.</text>
        <dbReference type="EC" id="6.5.1.2"/>
    </reaction>
</comment>
<comment type="cofactor">
    <cofactor evidence="1">
        <name>Mg(2+)</name>
        <dbReference type="ChEBI" id="CHEBI:18420"/>
    </cofactor>
    <cofactor evidence="1">
        <name>Mn(2+)</name>
        <dbReference type="ChEBI" id="CHEBI:29035"/>
    </cofactor>
</comment>
<comment type="similarity">
    <text evidence="1">Belongs to the NAD-dependent DNA ligase family. LigA subfamily.</text>
</comment>
<organism>
    <name type="scientific">Borrelia duttonii (strain Ly)</name>
    <dbReference type="NCBI Taxonomy" id="412419"/>
    <lineage>
        <taxon>Bacteria</taxon>
        <taxon>Pseudomonadati</taxon>
        <taxon>Spirochaetota</taxon>
        <taxon>Spirochaetia</taxon>
        <taxon>Spirochaetales</taxon>
        <taxon>Borreliaceae</taxon>
        <taxon>Borrelia</taxon>
    </lineage>
</organism>
<feature type="chain" id="PRO_0000380311" description="DNA ligase">
    <location>
        <begin position="1"/>
        <end position="669"/>
    </location>
</feature>
<feature type="domain" description="BRCT" evidence="1">
    <location>
        <begin position="589"/>
        <end position="669"/>
    </location>
</feature>
<feature type="active site" description="N6-AMP-lysine intermediate" evidence="1">
    <location>
        <position position="117"/>
    </location>
</feature>
<feature type="binding site" evidence="1">
    <location>
        <begin position="33"/>
        <end position="37"/>
    </location>
    <ligand>
        <name>NAD(+)</name>
        <dbReference type="ChEBI" id="CHEBI:57540"/>
    </ligand>
</feature>
<feature type="binding site" evidence="1">
    <location>
        <begin position="82"/>
        <end position="83"/>
    </location>
    <ligand>
        <name>NAD(+)</name>
        <dbReference type="ChEBI" id="CHEBI:57540"/>
    </ligand>
</feature>
<feature type="binding site" evidence="1">
    <location>
        <position position="115"/>
    </location>
    <ligand>
        <name>NAD(+)</name>
        <dbReference type="ChEBI" id="CHEBI:57540"/>
    </ligand>
</feature>
<feature type="binding site" evidence="1">
    <location>
        <position position="138"/>
    </location>
    <ligand>
        <name>NAD(+)</name>
        <dbReference type="ChEBI" id="CHEBI:57540"/>
    </ligand>
</feature>
<feature type="binding site" evidence="1">
    <location>
        <position position="172"/>
    </location>
    <ligand>
        <name>NAD(+)</name>
        <dbReference type="ChEBI" id="CHEBI:57540"/>
    </ligand>
</feature>
<feature type="binding site" evidence="1">
    <location>
        <position position="286"/>
    </location>
    <ligand>
        <name>NAD(+)</name>
        <dbReference type="ChEBI" id="CHEBI:57540"/>
    </ligand>
</feature>
<feature type="binding site" evidence="1">
    <location>
        <position position="310"/>
    </location>
    <ligand>
        <name>NAD(+)</name>
        <dbReference type="ChEBI" id="CHEBI:57540"/>
    </ligand>
</feature>
<feature type="binding site" evidence="1">
    <location>
        <position position="401"/>
    </location>
    <ligand>
        <name>Zn(2+)</name>
        <dbReference type="ChEBI" id="CHEBI:29105"/>
    </ligand>
</feature>
<feature type="binding site" evidence="1">
    <location>
        <position position="404"/>
    </location>
    <ligand>
        <name>Zn(2+)</name>
        <dbReference type="ChEBI" id="CHEBI:29105"/>
    </ligand>
</feature>
<feature type="binding site" evidence="1">
    <location>
        <position position="417"/>
    </location>
    <ligand>
        <name>Zn(2+)</name>
        <dbReference type="ChEBI" id="CHEBI:29105"/>
    </ligand>
</feature>
<feature type="binding site" evidence="1">
    <location>
        <position position="422"/>
    </location>
    <ligand>
        <name>Zn(2+)</name>
        <dbReference type="ChEBI" id="CHEBI:29105"/>
    </ligand>
</feature>
<protein>
    <recommendedName>
        <fullName evidence="1">DNA ligase</fullName>
        <ecNumber evidence="1">6.5.1.2</ecNumber>
    </recommendedName>
    <alternativeName>
        <fullName evidence="1">Polydeoxyribonucleotide synthase [NAD(+)]</fullName>
    </alternativeName>
</protein>
<keyword id="KW-0227">DNA damage</keyword>
<keyword id="KW-0234">DNA repair</keyword>
<keyword id="KW-0235">DNA replication</keyword>
<keyword id="KW-0436">Ligase</keyword>
<keyword id="KW-0460">Magnesium</keyword>
<keyword id="KW-0464">Manganese</keyword>
<keyword id="KW-0479">Metal-binding</keyword>
<keyword id="KW-0520">NAD</keyword>
<keyword id="KW-0862">Zinc</keyword>
<sequence>MGKDIKDEILSLRDAIKKWDREYYVDSSPTVGDVTYDKALLRLQYLENRYPEYKTLDSPTLKFGSDLLNDFKEVEHSYPILSLDKAYDVKELLLWVEKMSLEGSNLGFDMGISAEPKIDGCSIVLYYKDGILEKALTRGDGRFGNNVIENVRTIKNVPLCIGERVELVLRGEIYITKKDFLKINHTLDDSYINARNLTSGILRRINSREVVNFPLDIFVYDILYSSLELNTNHDAFDKLKHFGFKLNPFCKFFCGKNLGENIINYVKEIEEQRERFEYEIDGVVLKVDDFRLRDVLGYTSHHPKWSIAYKFESLRAVSKVIDIVVQVGRSGKITPVANIEKVLIAGAFITSASLHNQDYIDSIGLNVKDVVAISRRGDVIPAVELVVEKLSVGNFKIPNYCPSCKKSLIKEGAHLFCVNIHCPLKIMGHIKYFCSKKCMNIVGLSEKTIEFLFNMNFISSEIDLYTFDFDRLIGLKGFNFKRVNKLKRSIEESKNRPFKKLLLAMGIKDLGINTILLLINNNLNSFDAISLLCQDNKNALVKLLDIKGIGERIAFNIIRAFNDKIILDKFNFFKGLGFKMQEDSINCVVDSSFLFGKKFCITGSFDEYPRHVLIDKITKKGAIFNSSVSRYLDFLLVGKSPGLKLKKANNLGIKILSLFDIKNLVNLDD</sequence>
<accession>B5RMA6</accession>
<evidence type="ECO:0000255" key="1">
    <source>
        <dbReference type="HAMAP-Rule" id="MF_01588"/>
    </source>
</evidence>
<dbReference type="EC" id="6.5.1.2" evidence="1"/>
<dbReference type="EMBL" id="CP000976">
    <property type="protein sequence ID" value="ACH93492.1"/>
    <property type="molecule type" value="Genomic_DNA"/>
</dbReference>
<dbReference type="RefSeq" id="WP_012538301.1">
    <property type="nucleotide sequence ID" value="NC_011229.1"/>
</dbReference>
<dbReference type="SMR" id="B5RMA6"/>
<dbReference type="STRING" id="412419.BDU_554"/>
<dbReference type="KEGG" id="bdu:BDU_554"/>
<dbReference type="eggNOG" id="COG0272">
    <property type="taxonomic scope" value="Bacteria"/>
</dbReference>
<dbReference type="HOGENOM" id="CLU_007764_2_0_12"/>
<dbReference type="OrthoDB" id="9759736at2"/>
<dbReference type="Proteomes" id="UP000000611">
    <property type="component" value="Chromosome"/>
</dbReference>
<dbReference type="GO" id="GO:0003911">
    <property type="term" value="F:DNA ligase (NAD+) activity"/>
    <property type="evidence" value="ECO:0007669"/>
    <property type="project" value="UniProtKB-UniRule"/>
</dbReference>
<dbReference type="GO" id="GO:0046872">
    <property type="term" value="F:metal ion binding"/>
    <property type="evidence" value="ECO:0007669"/>
    <property type="project" value="UniProtKB-KW"/>
</dbReference>
<dbReference type="GO" id="GO:0006281">
    <property type="term" value="P:DNA repair"/>
    <property type="evidence" value="ECO:0007669"/>
    <property type="project" value="UniProtKB-KW"/>
</dbReference>
<dbReference type="GO" id="GO:0006260">
    <property type="term" value="P:DNA replication"/>
    <property type="evidence" value="ECO:0007669"/>
    <property type="project" value="UniProtKB-KW"/>
</dbReference>
<dbReference type="CDD" id="cd17748">
    <property type="entry name" value="BRCT_DNA_ligase_like"/>
    <property type="match status" value="1"/>
</dbReference>
<dbReference type="CDD" id="cd00114">
    <property type="entry name" value="LIGANc"/>
    <property type="match status" value="1"/>
</dbReference>
<dbReference type="Gene3D" id="1.10.150.20">
    <property type="entry name" value="5' to 3' exonuclease, C-terminal subdomain"/>
    <property type="match status" value="2"/>
</dbReference>
<dbReference type="Gene3D" id="3.40.50.10190">
    <property type="entry name" value="BRCT domain"/>
    <property type="match status" value="1"/>
</dbReference>
<dbReference type="Gene3D" id="3.30.470.30">
    <property type="entry name" value="DNA ligase/mRNA capping enzyme"/>
    <property type="match status" value="1"/>
</dbReference>
<dbReference type="Gene3D" id="1.10.287.610">
    <property type="entry name" value="Helix hairpin bin"/>
    <property type="match status" value="1"/>
</dbReference>
<dbReference type="Gene3D" id="2.40.50.140">
    <property type="entry name" value="Nucleic acid-binding proteins"/>
    <property type="match status" value="1"/>
</dbReference>
<dbReference type="HAMAP" id="MF_01588">
    <property type="entry name" value="DNA_ligase_A"/>
    <property type="match status" value="1"/>
</dbReference>
<dbReference type="InterPro" id="IPR001357">
    <property type="entry name" value="BRCT_dom"/>
</dbReference>
<dbReference type="InterPro" id="IPR036420">
    <property type="entry name" value="BRCT_dom_sf"/>
</dbReference>
<dbReference type="InterPro" id="IPR001679">
    <property type="entry name" value="DNA_ligase"/>
</dbReference>
<dbReference type="InterPro" id="IPR013839">
    <property type="entry name" value="DNAligase_adenylation"/>
</dbReference>
<dbReference type="InterPro" id="IPR013840">
    <property type="entry name" value="DNAligase_N"/>
</dbReference>
<dbReference type="InterPro" id="IPR012340">
    <property type="entry name" value="NA-bd_OB-fold"/>
</dbReference>
<dbReference type="InterPro" id="IPR004150">
    <property type="entry name" value="NAD_DNA_ligase_OB"/>
</dbReference>
<dbReference type="InterPro" id="IPR010994">
    <property type="entry name" value="RuvA_2-like"/>
</dbReference>
<dbReference type="NCBIfam" id="TIGR00575">
    <property type="entry name" value="dnlj"/>
    <property type="match status" value="1"/>
</dbReference>
<dbReference type="NCBIfam" id="NF005932">
    <property type="entry name" value="PRK07956.1"/>
    <property type="match status" value="1"/>
</dbReference>
<dbReference type="NCBIfam" id="NF010930">
    <property type="entry name" value="PRK14350.1"/>
    <property type="match status" value="1"/>
</dbReference>
<dbReference type="Pfam" id="PF00533">
    <property type="entry name" value="BRCT"/>
    <property type="match status" value="1"/>
</dbReference>
<dbReference type="Pfam" id="PF01653">
    <property type="entry name" value="DNA_ligase_aden"/>
    <property type="match status" value="1"/>
</dbReference>
<dbReference type="Pfam" id="PF03120">
    <property type="entry name" value="DNA_ligase_OB"/>
    <property type="match status" value="1"/>
</dbReference>
<dbReference type="PIRSF" id="PIRSF001604">
    <property type="entry name" value="LigA"/>
    <property type="match status" value="1"/>
</dbReference>
<dbReference type="SMART" id="SM00292">
    <property type="entry name" value="BRCT"/>
    <property type="match status" value="1"/>
</dbReference>
<dbReference type="SMART" id="SM00532">
    <property type="entry name" value="LIGANc"/>
    <property type="match status" value="1"/>
</dbReference>
<dbReference type="SUPFAM" id="SSF52113">
    <property type="entry name" value="BRCT domain"/>
    <property type="match status" value="1"/>
</dbReference>
<dbReference type="SUPFAM" id="SSF56091">
    <property type="entry name" value="DNA ligase/mRNA capping enzyme, catalytic domain"/>
    <property type="match status" value="1"/>
</dbReference>
<dbReference type="SUPFAM" id="SSF50249">
    <property type="entry name" value="Nucleic acid-binding proteins"/>
    <property type="match status" value="1"/>
</dbReference>
<dbReference type="SUPFAM" id="SSF47781">
    <property type="entry name" value="RuvA domain 2-like"/>
    <property type="match status" value="1"/>
</dbReference>